<name>VIRB3_RHIRD</name>
<organism>
    <name type="scientific">Rhizobium radiobacter</name>
    <name type="common">Agrobacterium tumefaciens</name>
    <name type="synonym">Agrobacterium radiobacter</name>
    <dbReference type="NCBI Taxonomy" id="358"/>
    <lineage>
        <taxon>Bacteria</taxon>
        <taxon>Pseudomonadati</taxon>
        <taxon>Pseudomonadota</taxon>
        <taxon>Alphaproteobacteria</taxon>
        <taxon>Hyphomicrobiales</taxon>
        <taxon>Rhizobiaceae</taxon>
        <taxon>Rhizobium/Agrobacterium group</taxon>
        <taxon>Agrobacterium</taxon>
        <taxon>Agrobacterium tumefaciens complex</taxon>
    </lineage>
</organism>
<evidence type="ECO:0000255" key="1"/>
<evidence type="ECO:0000305" key="2"/>
<geneLocation type="plasmid">
    <name>pTiA6</name>
</geneLocation>
<accession>P0A3V8</accession>
<accession>P05352</accession>
<comment type="function">
    <text>VirB proteins are suggested to act at the bacterial surface and there play an important role in directing T-DNA transfer to plant cells.</text>
</comment>
<comment type="subcellular location">
    <subcellularLocation>
        <location evidence="2">Membrane</location>
        <topology evidence="2">Single-pass membrane protein</topology>
    </subcellularLocation>
</comment>
<comment type="similarity">
    <text evidence="2">Belongs to the virB3 family.</text>
</comment>
<reference key="1">
    <citation type="journal article" date="1988" name="J. Biol. Chem.">
        <title>Characterization of the virB operon from an Agrobacterium tumefaciens Ti plasmid.</title>
        <authorList>
            <person name="Ward J.E."/>
            <person name="Akiyoshi D.E."/>
            <person name="Regier D."/>
            <person name="Datta A."/>
            <person name="Gordon M.P."/>
            <person name="Nester E.W."/>
        </authorList>
    </citation>
    <scope>NUCLEOTIDE SEQUENCE [GENOMIC DNA]</scope>
</reference>
<feature type="chain" id="PRO_0000065839" description="Protein virB3">
    <location>
        <begin position="1"/>
        <end position="108"/>
    </location>
</feature>
<feature type="transmembrane region" description="Helical" evidence="1">
    <location>
        <begin position="22"/>
        <end position="42"/>
    </location>
</feature>
<keyword id="KW-0192">Crown gall tumor</keyword>
<keyword id="KW-0472">Membrane</keyword>
<keyword id="KW-0614">Plasmid</keyword>
<keyword id="KW-0812">Transmembrane</keyword>
<keyword id="KW-1133">Transmembrane helix</keyword>
<protein>
    <recommendedName>
        <fullName>Protein virB3</fullName>
    </recommendedName>
</protein>
<dbReference type="EMBL" id="J03216">
    <property type="protein sequence ID" value="AAA88647.1"/>
    <property type="molecule type" value="Genomic_DNA"/>
</dbReference>
<dbReference type="PIR" id="S00779">
    <property type="entry name" value="B3AG55"/>
</dbReference>
<dbReference type="RefSeq" id="NP_059801.1">
    <property type="nucleotide sequence ID" value="NC_002377.1"/>
</dbReference>
<dbReference type="RefSeq" id="WP_010892489.1">
    <property type="nucleotide sequence ID" value="NZ_QSNU01000012.1"/>
</dbReference>
<dbReference type="SMR" id="P0A3V8"/>
<dbReference type="TCDB" id="3.A.7.1.1">
    <property type="family name" value="the type iv (conjugal dna-protein transfer or virb) secretory pathway (ivsp) family"/>
</dbReference>
<dbReference type="OrthoDB" id="9799932at2"/>
<dbReference type="GO" id="GO:0016020">
    <property type="term" value="C:membrane"/>
    <property type="evidence" value="ECO:0007669"/>
    <property type="project" value="UniProtKB-SubCell"/>
</dbReference>
<dbReference type="InterPro" id="IPR007792">
    <property type="entry name" value="T4SS_VirB3/TrbD/AvhB"/>
</dbReference>
<dbReference type="NCBIfam" id="NF010428">
    <property type="entry name" value="PRK13854.1"/>
    <property type="match status" value="1"/>
</dbReference>
<dbReference type="Pfam" id="PF05101">
    <property type="entry name" value="VirB3"/>
    <property type="match status" value="1"/>
</dbReference>
<sequence length="108" mass="11760">MNDRLEEATLYLAATRPALFLGVPLTLAGLFMMFAGFVIVIVQNPLYEVVLAPLWFGARLIVERDYNAASVVLLFLRTAGRSIDSAVWGGATVSPNPIRVPPRGRGMV</sequence>
<proteinExistence type="inferred from homology"/>
<gene>
    <name type="primary">virB3</name>
</gene>